<evidence type="ECO:0000255" key="1"/>
<evidence type="ECO:0000256" key="2">
    <source>
        <dbReference type="SAM" id="MobiDB-lite"/>
    </source>
</evidence>
<evidence type="ECO:0000305" key="3"/>
<organism>
    <name type="scientific">Treponema pallidum (strain Nichols)</name>
    <dbReference type="NCBI Taxonomy" id="243276"/>
    <lineage>
        <taxon>Bacteria</taxon>
        <taxon>Pseudomonadati</taxon>
        <taxon>Spirochaetota</taxon>
        <taxon>Spirochaetia</taxon>
        <taxon>Spirochaetales</taxon>
        <taxon>Treponemataceae</taxon>
        <taxon>Treponema</taxon>
    </lineage>
</organism>
<name>Y1014_TREPA</name>
<sequence length="644" mass="71127">MVCSITLLKVRSKRHLLSYLGVVGVGIAGLCIYRSVWGSRPFLERLARADSLIAQERKGAALRGLARMVGHARESSQYLSIAKRQMELSASAAALRTLQRGIRRSADDGRLAALVIHLLLREARFEEAISYVPRVVHKGYESIGAEALIKAALIGSRTGGDSPSRGSFHSERAEHVPEEPVEFSQVQGGRDQAHVTAFPLDRGEEQFRVEPSPPIRHTTGIALARIAPALWLAAFGVTGMHAFLQNAACAYARVGELHAAFRLYSRILGTEAPENTAFWATVAYDAGQFSLVFELLPISLARADLFGTYSAASTHARTHLLLAADAAFDGGDRARARAFWYAYVDRFPGTSTHALYNLALTAPHAQERVRMLAQCVEGDKTYYPAVACYARESIAFRAAHRQRDSVTELLSERGVYSVQMEQEHFLSPHFPVEARSLLAELAQEAMHGRADVRFALEYFRFCYPAQKRLQGSRGALWQLLEVFPVDTQVRRYARWFFFRIGEYESAFGLSDAGGGPEDAFYRALAAASRTGRVESILGGLVEATRAVEARSAAFANIAIVLERMGKKTAAAEHFVLAADEATRESVRQLQKEAGEGEAEEHPRARPAAGKAQRWREWYQRAGQLLQQQGKTVAARALLQRAQAR</sequence>
<dbReference type="EMBL" id="AE000520">
    <property type="protein sequence ID" value="AAC65972.1"/>
    <property type="molecule type" value="Genomic_DNA"/>
</dbReference>
<dbReference type="PIR" id="B71253">
    <property type="entry name" value="B71253"/>
</dbReference>
<dbReference type="RefSeq" id="WP_010882458.1">
    <property type="nucleotide sequence ID" value="NC_021490.2"/>
</dbReference>
<dbReference type="STRING" id="243276.TP_1014"/>
<dbReference type="EnsemblBacteria" id="AAC65972">
    <property type="protein sequence ID" value="AAC65972"/>
    <property type="gene ID" value="TP_1014"/>
</dbReference>
<dbReference type="KEGG" id="tpa:TP_1014"/>
<dbReference type="KEGG" id="tpw:TPANIC_1014"/>
<dbReference type="eggNOG" id="ENOG5031C4W">
    <property type="taxonomic scope" value="Bacteria"/>
</dbReference>
<dbReference type="HOGENOM" id="CLU_492532_0_0_12"/>
<dbReference type="OrthoDB" id="353976at2"/>
<dbReference type="Proteomes" id="UP000000811">
    <property type="component" value="Chromosome"/>
</dbReference>
<dbReference type="GO" id="GO:0016020">
    <property type="term" value="C:membrane"/>
    <property type="evidence" value="ECO:0007669"/>
    <property type="project" value="UniProtKB-SubCell"/>
</dbReference>
<dbReference type="Gene3D" id="1.25.40.10">
    <property type="entry name" value="Tetratricopeptide repeat domain"/>
    <property type="match status" value="1"/>
</dbReference>
<dbReference type="InterPro" id="IPR011990">
    <property type="entry name" value="TPR-like_helical_dom_sf"/>
</dbReference>
<protein>
    <recommendedName>
        <fullName>Uncharacterized protein TP_1014</fullName>
    </recommendedName>
</protein>
<feature type="chain" id="PRO_0000202373" description="Uncharacterized protein TP_1014">
    <location>
        <begin position="1"/>
        <end position="644"/>
    </location>
</feature>
<feature type="transmembrane region" description="Helical" evidence="1">
    <location>
        <begin position="16"/>
        <end position="38"/>
    </location>
</feature>
<feature type="region of interest" description="Disordered" evidence="2">
    <location>
        <begin position="586"/>
        <end position="613"/>
    </location>
</feature>
<feature type="compositionally biased region" description="Basic and acidic residues" evidence="2">
    <location>
        <begin position="586"/>
        <end position="603"/>
    </location>
</feature>
<comment type="subcellular location">
    <subcellularLocation>
        <location evidence="3">Membrane</location>
        <topology evidence="3">Single-pass membrane protein</topology>
    </subcellularLocation>
</comment>
<proteinExistence type="predicted"/>
<gene>
    <name type="ordered locus">TP_1014</name>
</gene>
<keyword id="KW-0472">Membrane</keyword>
<keyword id="KW-1185">Reference proteome</keyword>
<keyword id="KW-0812">Transmembrane</keyword>
<keyword id="KW-1133">Transmembrane helix</keyword>
<reference key="1">
    <citation type="journal article" date="1998" name="Science">
        <title>Complete genome sequence of Treponema pallidum, the syphilis spirochete.</title>
        <authorList>
            <person name="Fraser C.M."/>
            <person name="Norris S.J."/>
            <person name="Weinstock G.M."/>
            <person name="White O."/>
            <person name="Sutton G.G."/>
            <person name="Dodson R.J."/>
            <person name="Gwinn M.L."/>
            <person name="Hickey E.K."/>
            <person name="Clayton R.A."/>
            <person name="Ketchum K.A."/>
            <person name="Sodergren E."/>
            <person name="Hardham J.M."/>
            <person name="McLeod M.P."/>
            <person name="Salzberg S.L."/>
            <person name="Peterson J.D."/>
            <person name="Khalak H.G."/>
            <person name="Richardson D.L."/>
            <person name="Howell J.K."/>
            <person name="Chidambaram M."/>
            <person name="Utterback T.R."/>
            <person name="McDonald L.A."/>
            <person name="Artiach P."/>
            <person name="Bowman C."/>
            <person name="Cotton M.D."/>
            <person name="Fujii C."/>
            <person name="Garland S.A."/>
            <person name="Hatch B."/>
            <person name="Horst K."/>
            <person name="Roberts K.M."/>
            <person name="Sandusky M."/>
            <person name="Weidman J.F."/>
            <person name="Smith H.O."/>
            <person name="Venter J.C."/>
        </authorList>
    </citation>
    <scope>NUCLEOTIDE SEQUENCE [LARGE SCALE GENOMIC DNA]</scope>
    <source>
        <strain>Nichols</strain>
    </source>
</reference>
<accession>O83978</accession>